<dbReference type="EC" id="2.2.1.7" evidence="1"/>
<dbReference type="EMBL" id="CP000283">
    <property type="protein sequence ID" value="ABE41522.1"/>
    <property type="molecule type" value="Genomic_DNA"/>
</dbReference>
<dbReference type="SMR" id="Q130G7"/>
<dbReference type="STRING" id="316057.RPD_4305"/>
<dbReference type="KEGG" id="rpd:RPD_4305"/>
<dbReference type="eggNOG" id="COG1154">
    <property type="taxonomic scope" value="Bacteria"/>
</dbReference>
<dbReference type="HOGENOM" id="CLU_009227_1_4_5"/>
<dbReference type="UniPathway" id="UPA00064">
    <property type="reaction ID" value="UER00091"/>
</dbReference>
<dbReference type="Proteomes" id="UP000001818">
    <property type="component" value="Chromosome"/>
</dbReference>
<dbReference type="GO" id="GO:0008661">
    <property type="term" value="F:1-deoxy-D-xylulose-5-phosphate synthase activity"/>
    <property type="evidence" value="ECO:0007669"/>
    <property type="project" value="UniProtKB-UniRule"/>
</dbReference>
<dbReference type="GO" id="GO:0000287">
    <property type="term" value="F:magnesium ion binding"/>
    <property type="evidence" value="ECO:0007669"/>
    <property type="project" value="UniProtKB-UniRule"/>
</dbReference>
<dbReference type="GO" id="GO:0030976">
    <property type="term" value="F:thiamine pyrophosphate binding"/>
    <property type="evidence" value="ECO:0007669"/>
    <property type="project" value="UniProtKB-UniRule"/>
</dbReference>
<dbReference type="GO" id="GO:0052865">
    <property type="term" value="P:1-deoxy-D-xylulose 5-phosphate biosynthetic process"/>
    <property type="evidence" value="ECO:0007669"/>
    <property type="project" value="UniProtKB-UniPathway"/>
</dbReference>
<dbReference type="GO" id="GO:0019682">
    <property type="term" value="P:glyceraldehyde-3-phosphate metabolic process"/>
    <property type="evidence" value="ECO:0007669"/>
    <property type="project" value="UniProtKB-ARBA"/>
</dbReference>
<dbReference type="GO" id="GO:0016114">
    <property type="term" value="P:terpenoid biosynthetic process"/>
    <property type="evidence" value="ECO:0007669"/>
    <property type="project" value="UniProtKB-UniRule"/>
</dbReference>
<dbReference type="GO" id="GO:0009228">
    <property type="term" value="P:thiamine biosynthetic process"/>
    <property type="evidence" value="ECO:0007669"/>
    <property type="project" value="UniProtKB-UniRule"/>
</dbReference>
<dbReference type="CDD" id="cd02007">
    <property type="entry name" value="TPP_DXS"/>
    <property type="match status" value="1"/>
</dbReference>
<dbReference type="CDD" id="cd07033">
    <property type="entry name" value="TPP_PYR_DXS_TK_like"/>
    <property type="match status" value="1"/>
</dbReference>
<dbReference type="FunFam" id="3.40.50.920:FF:000002">
    <property type="entry name" value="1-deoxy-D-xylulose-5-phosphate synthase"/>
    <property type="match status" value="1"/>
</dbReference>
<dbReference type="FunFam" id="3.40.50.970:FF:000005">
    <property type="entry name" value="1-deoxy-D-xylulose-5-phosphate synthase"/>
    <property type="match status" value="1"/>
</dbReference>
<dbReference type="Gene3D" id="3.40.50.920">
    <property type="match status" value="1"/>
</dbReference>
<dbReference type="Gene3D" id="3.40.50.970">
    <property type="match status" value="2"/>
</dbReference>
<dbReference type="HAMAP" id="MF_00315">
    <property type="entry name" value="DXP_synth"/>
    <property type="match status" value="1"/>
</dbReference>
<dbReference type="InterPro" id="IPR005477">
    <property type="entry name" value="Dxylulose-5-P_synthase"/>
</dbReference>
<dbReference type="InterPro" id="IPR029061">
    <property type="entry name" value="THDP-binding"/>
</dbReference>
<dbReference type="InterPro" id="IPR009014">
    <property type="entry name" value="Transketo_C/PFOR_II"/>
</dbReference>
<dbReference type="InterPro" id="IPR005475">
    <property type="entry name" value="Transketolase-like_Pyr-bd"/>
</dbReference>
<dbReference type="InterPro" id="IPR020826">
    <property type="entry name" value="Transketolase_BS"/>
</dbReference>
<dbReference type="InterPro" id="IPR033248">
    <property type="entry name" value="Transketolase_C"/>
</dbReference>
<dbReference type="InterPro" id="IPR049557">
    <property type="entry name" value="Transketolase_CS"/>
</dbReference>
<dbReference type="NCBIfam" id="TIGR00204">
    <property type="entry name" value="dxs"/>
    <property type="match status" value="1"/>
</dbReference>
<dbReference type="NCBIfam" id="NF003933">
    <property type="entry name" value="PRK05444.2-2"/>
    <property type="match status" value="1"/>
</dbReference>
<dbReference type="PANTHER" id="PTHR43322">
    <property type="entry name" value="1-D-DEOXYXYLULOSE 5-PHOSPHATE SYNTHASE-RELATED"/>
    <property type="match status" value="1"/>
</dbReference>
<dbReference type="PANTHER" id="PTHR43322:SF5">
    <property type="entry name" value="1-DEOXY-D-XYLULOSE-5-PHOSPHATE SYNTHASE, CHLOROPLASTIC"/>
    <property type="match status" value="1"/>
</dbReference>
<dbReference type="Pfam" id="PF13292">
    <property type="entry name" value="DXP_synthase_N"/>
    <property type="match status" value="1"/>
</dbReference>
<dbReference type="Pfam" id="PF02779">
    <property type="entry name" value="Transket_pyr"/>
    <property type="match status" value="1"/>
</dbReference>
<dbReference type="Pfam" id="PF02780">
    <property type="entry name" value="Transketolase_C"/>
    <property type="match status" value="1"/>
</dbReference>
<dbReference type="SMART" id="SM00861">
    <property type="entry name" value="Transket_pyr"/>
    <property type="match status" value="1"/>
</dbReference>
<dbReference type="SUPFAM" id="SSF52518">
    <property type="entry name" value="Thiamin diphosphate-binding fold (THDP-binding)"/>
    <property type="match status" value="2"/>
</dbReference>
<dbReference type="SUPFAM" id="SSF52922">
    <property type="entry name" value="TK C-terminal domain-like"/>
    <property type="match status" value="1"/>
</dbReference>
<dbReference type="PROSITE" id="PS00801">
    <property type="entry name" value="TRANSKETOLASE_1"/>
    <property type="match status" value="1"/>
</dbReference>
<dbReference type="PROSITE" id="PS00802">
    <property type="entry name" value="TRANSKETOLASE_2"/>
    <property type="match status" value="1"/>
</dbReference>
<sequence length="638" mass="68394">MSKTPLLDTIRTPEDLRKLRVDQVQQVADELRQETIDAVSVTGGHFGAGLGVVELTTAIHYVFDTPRDRLIWDVGHQAYPHKILTGRRDRIRTLRTAGGLSGFTKRTESDYDPFGAAHSSTSISAGLGMAVARDLAGGNNNVIAVIGDGSISAGMAYEAMNNAGAMNSRLIVILNDNNMSIAPPVGAMSAYLSRLYSGKTYRSLREAGKQIGKHLPKLIADRAARAEEYSRGFMMGGGTLFEELGFYYVGPIDGHNLDHLLPILQNVRDAETGPFLIHVVTQKGKGYAPAEAASDKYHAVVKFDIATGTQAKAKSNAPSYQNVFGQSLVKEAAKDDKIVGITAAMPSGTGIDIFEKAFPARTFDVGIAEQHAVTFAAGLATEGYKPFCAIYSTFLQRAYDQVVHDVALQSLPVRFAIDRAGLVGADGATHAGSFDNAYLGCLPNMVIMAASDEAELVHMVATQVAINDRPSALRYPRGEGRGVEMPDVGVPLEIGKGRVIRQGNKVALLSFGTRLAECEKAAEELAALGLSTTVADARFMKPLDVDLVLKLANEHEILITIEEGSIGGFGTHVMQTLAEHGKLDGEVKMRAMVLPDVFLDHDTPTAMYANAGLDAKAIVKKVFEALGKEHKAETVKLA</sequence>
<comment type="function">
    <text evidence="1">Catalyzes the acyloin condensation reaction between C atoms 2 and 3 of pyruvate and glyceraldehyde 3-phosphate to yield 1-deoxy-D-xylulose-5-phosphate (DXP).</text>
</comment>
<comment type="catalytic activity">
    <reaction evidence="1">
        <text>D-glyceraldehyde 3-phosphate + pyruvate + H(+) = 1-deoxy-D-xylulose 5-phosphate + CO2</text>
        <dbReference type="Rhea" id="RHEA:12605"/>
        <dbReference type="ChEBI" id="CHEBI:15361"/>
        <dbReference type="ChEBI" id="CHEBI:15378"/>
        <dbReference type="ChEBI" id="CHEBI:16526"/>
        <dbReference type="ChEBI" id="CHEBI:57792"/>
        <dbReference type="ChEBI" id="CHEBI:59776"/>
        <dbReference type="EC" id="2.2.1.7"/>
    </reaction>
</comment>
<comment type="cofactor">
    <cofactor evidence="1">
        <name>Mg(2+)</name>
        <dbReference type="ChEBI" id="CHEBI:18420"/>
    </cofactor>
    <text evidence="1">Binds 1 Mg(2+) ion per subunit.</text>
</comment>
<comment type="cofactor">
    <cofactor evidence="1">
        <name>thiamine diphosphate</name>
        <dbReference type="ChEBI" id="CHEBI:58937"/>
    </cofactor>
    <text evidence="1">Binds 1 thiamine pyrophosphate per subunit.</text>
</comment>
<comment type="pathway">
    <text evidence="1">Metabolic intermediate biosynthesis; 1-deoxy-D-xylulose 5-phosphate biosynthesis; 1-deoxy-D-xylulose 5-phosphate from D-glyceraldehyde 3-phosphate and pyruvate: step 1/1.</text>
</comment>
<comment type="subunit">
    <text evidence="1">Homodimer.</text>
</comment>
<comment type="similarity">
    <text evidence="1">Belongs to the transketolase family. DXPS subfamily.</text>
</comment>
<name>DXS_RHOPS</name>
<protein>
    <recommendedName>
        <fullName evidence="1">1-deoxy-D-xylulose-5-phosphate synthase</fullName>
        <ecNumber evidence="1">2.2.1.7</ecNumber>
    </recommendedName>
    <alternativeName>
        <fullName evidence="1">1-deoxyxylulose-5-phosphate synthase</fullName>
        <shortName evidence="1">DXP synthase</shortName>
        <shortName evidence="1">DXPS</shortName>
    </alternativeName>
</protein>
<proteinExistence type="inferred from homology"/>
<evidence type="ECO:0000255" key="1">
    <source>
        <dbReference type="HAMAP-Rule" id="MF_00315"/>
    </source>
</evidence>
<reference key="1">
    <citation type="submission" date="2006-03" db="EMBL/GenBank/DDBJ databases">
        <title>Complete sequence of Rhodopseudomonas palustris BisB5.</title>
        <authorList>
            <consortium name="US DOE Joint Genome Institute"/>
            <person name="Copeland A."/>
            <person name="Lucas S."/>
            <person name="Lapidus A."/>
            <person name="Barry K."/>
            <person name="Detter J.C."/>
            <person name="Glavina del Rio T."/>
            <person name="Hammon N."/>
            <person name="Israni S."/>
            <person name="Dalin E."/>
            <person name="Tice H."/>
            <person name="Pitluck S."/>
            <person name="Chain P."/>
            <person name="Malfatti S."/>
            <person name="Shin M."/>
            <person name="Vergez L."/>
            <person name="Schmutz J."/>
            <person name="Larimer F."/>
            <person name="Land M."/>
            <person name="Hauser L."/>
            <person name="Pelletier D.A."/>
            <person name="Kyrpides N."/>
            <person name="Lykidis A."/>
            <person name="Oda Y."/>
            <person name="Harwood C.S."/>
            <person name="Richardson P."/>
        </authorList>
    </citation>
    <scope>NUCLEOTIDE SEQUENCE [LARGE SCALE GENOMIC DNA]</scope>
    <source>
        <strain>BisB5</strain>
    </source>
</reference>
<gene>
    <name evidence="1" type="primary">dxs</name>
    <name type="ordered locus">RPD_4305</name>
</gene>
<keyword id="KW-0414">Isoprene biosynthesis</keyword>
<keyword id="KW-0460">Magnesium</keyword>
<keyword id="KW-0479">Metal-binding</keyword>
<keyword id="KW-0784">Thiamine biosynthesis</keyword>
<keyword id="KW-0786">Thiamine pyrophosphate</keyword>
<keyword id="KW-0808">Transferase</keyword>
<organism>
    <name type="scientific">Rhodopseudomonas palustris (strain BisB5)</name>
    <dbReference type="NCBI Taxonomy" id="316057"/>
    <lineage>
        <taxon>Bacteria</taxon>
        <taxon>Pseudomonadati</taxon>
        <taxon>Pseudomonadota</taxon>
        <taxon>Alphaproteobacteria</taxon>
        <taxon>Hyphomicrobiales</taxon>
        <taxon>Nitrobacteraceae</taxon>
        <taxon>Rhodopseudomonas</taxon>
    </lineage>
</organism>
<accession>Q130G7</accession>
<feature type="chain" id="PRO_1000019070" description="1-deoxy-D-xylulose-5-phosphate synthase">
    <location>
        <begin position="1"/>
        <end position="638"/>
    </location>
</feature>
<feature type="binding site" evidence="1">
    <location>
        <position position="76"/>
    </location>
    <ligand>
        <name>thiamine diphosphate</name>
        <dbReference type="ChEBI" id="CHEBI:58937"/>
    </ligand>
</feature>
<feature type="binding site" evidence="1">
    <location>
        <begin position="117"/>
        <end position="119"/>
    </location>
    <ligand>
        <name>thiamine diphosphate</name>
        <dbReference type="ChEBI" id="CHEBI:58937"/>
    </ligand>
</feature>
<feature type="binding site" evidence="1">
    <location>
        <position position="148"/>
    </location>
    <ligand>
        <name>Mg(2+)</name>
        <dbReference type="ChEBI" id="CHEBI:18420"/>
    </ligand>
</feature>
<feature type="binding site" evidence="1">
    <location>
        <begin position="149"/>
        <end position="150"/>
    </location>
    <ligand>
        <name>thiamine diphosphate</name>
        <dbReference type="ChEBI" id="CHEBI:58937"/>
    </ligand>
</feature>
<feature type="binding site" evidence="1">
    <location>
        <position position="177"/>
    </location>
    <ligand>
        <name>Mg(2+)</name>
        <dbReference type="ChEBI" id="CHEBI:18420"/>
    </ligand>
</feature>
<feature type="binding site" evidence="1">
    <location>
        <position position="177"/>
    </location>
    <ligand>
        <name>thiamine diphosphate</name>
        <dbReference type="ChEBI" id="CHEBI:58937"/>
    </ligand>
</feature>
<feature type="binding site" evidence="1">
    <location>
        <position position="287"/>
    </location>
    <ligand>
        <name>thiamine diphosphate</name>
        <dbReference type="ChEBI" id="CHEBI:58937"/>
    </ligand>
</feature>
<feature type="binding site" evidence="1">
    <location>
        <position position="369"/>
    </location>
    <ligand>
        <name>thiamine diphosphate</name>
        <dbReference type="ChEBI" id="CHEBI:58937"/>
    </ligand>
</feature>